<protein>
    <recommendedName>
        <fullName evidence="1">Large ribosomal subunit protein uL23</fullName>
    </recommendedName>
    <alternativeName>
        <fullName evidence="2">50S ribosomal protein L23</fullName>
    </alternativeName>
</protein>
<dbReference type="EMBL" id="AL596173">
    <property type="protein sequence ID" value="CAC98005.1"/>
    <property type="molecule type" value="Genomic_DNA"/>
</dbReference>
<dbReference type="PIR" id="AE1779">
    <property type="entry name" value="AE1779"/>
</dbReference>
<dbReference type="RefSeq" id="WP_003728540.1">
    <property type="nucleotide sequence ID" value="NC_003212.1"/>
</dbReference>
<dbReference type="SMR" id="Q927K9"/>
<dbReference type="STRING" id="272626.gene:17567166"/>
<dbReference type="GeneID" id="93240511"/>
<dbReference type="KEGG" id="lin:rplW"/>
<dbReference type="eggNOG" id="COG0089">
    <property type="taxonomic scope" value="Bacteria"/>
</dbReference>
<dbReference type="HOGENOM" id="CLU_037562_3_2_9"/>
<dbReference type="OrthoDB" id="9793353at2"/>
<dbReference type="Proteomes" id="UP000002513">
    <property type="component" value="Chromosome"/>
</dbReference>
<dbReference type="GO" id="GO:1990904">
    <property type="term" value="C:ribonucleoprotein complex"/>
    <property type="evidence" value="ECO:0007669"/>
    <property type="project" value="UniProtKB-KW"/>
</dbReference>
<dbReference type="GO" id="GO:0005840">
    <property type="term" value="C:ribosome"/>
    <property type="evidence" value="ECO:0007669"/>
    <property type="project" value="UniProtKB-KW"/>
</dbReference>
<dbReference type="GO" id="GO:0019843">
    <property type="term" value="F:rRNA binding"/>
    <property type="evidence" value="ECO:0007669"/>
    <property type="project" value="UniProtKB-UniRule"/>
</dbReference>
<dbReference type="GO" id="GO:0003735">
    <property type="term" value="F:structural constituent of ribosome"/>
    <property type="evidence" value="ECO:0007669"/>
    <property type="project" value="InterPro"/>
</dbReference>
<dbReference type="GO" id="GO:0006412">
    <property type="term" value="P:translation"/>
    <property type="evidence" value="ECO:0007669"/>
    <property type="project" value="UniProtKB-UniRule"/>
</dbReference>
<dbReference type="FunFam" id="3.30.70.330:FF:000001">
    <property type="entry name" value="50S ribosomal protein L23"/>
    <property type="match status" value="1"/>
</dbReference>
<dbReference type="Gene3D" id="3.30.70.330">
    <property type="match status" value="1"/>
</dbReference>
<dbReference type="HAMAP" id="MF_01369_B">
    <property type="entry name" value="Ribosomal_uL23_B"/>
    <property type="match status" value="1"/>
</dbReference>
<dbReference type="InterPro" id="IPR012677">
    <property type="entry name" value="Nucleotide-bd_a/b_plait_sf"/>
</dbReference>
<dbReference type="InterPro" id="IPR013025">
    <property type="entry name" value="Ribosomal_uL23-like"/>
</dbReference>
<dbReference type="InterPro" id="IPR012678">
    <property type="entry name" value="Ribosomal_uL23/eL15/eS24_sf"/>
</dbReference>
<dbReference type="NCBIfam" id="NF004363">
    <property type="entry name" value="PRK05738.2-4"/>
    <property type="match status" value="1"/>
</dbReference>
<dbReference type="PANTHER" id="PTHR11620">
    <property type="entry name" value="60S RIBOSOMAL PROTEIN L23A"/>
    <property type="match status" value="1"/>
</dbReference>
<dbReference type="Pfam" id="PF00276">
    <property type="entry name" value="Ribosomal_L23"/>
    <property type="match status" value="1"/>
</dbReference>
<dbReference type="SUPFAM" id="SSF54189">
    <property type="entry name" value="Ribosomal proteins S24e, L23 and L15e"/>
    <property type="match status" value="1"/>
</dbReference>
<accession>Q927K9</accession>
<keyword id="KW-0687">Ribonucleoprotein</keyword>
<keyword id="KW-0689">Ribosomal protein</keyword>
<keyword id="KW-0694">RNA-binding</keyword>
<keyword id="KW-0699">rRNA-binding</keyword>
<name>RL23_LISIN</name>
<evidence type="ECO:0000255" key="1">
    <source>
        <dbReference type="HAMAP-Rule" id="MF_01369"/>
    </source>
</evidence>
<evidence type="ECO:0000305" key="2"/>
<proteinExistence type="inferred from homology"/>
<feature type="chain" id="PRO_1000068101" description="Large ribosomal subunit protein uL23">
    <location>
        <begin position="1"/>
        <end position="94"/>
    </location>
</feature>
<sequence length="94" mass="10930">MDARDIIKRPVVTEESTSILDDKKYTFEVDTRATKTQVKYAIEEIFDVKVAKVNVMNYKGKLKRMGRYAGYTNKRRKAIVTVTADSKEIQFFEV</sequence>
<gene>
    <name evidence="1" type="primary">rplW</name>
    <name type="ordered locus">lin2779</name>
</gene>
<comment type="function">
    <text evidence="1">One of the early assembly proteins it binds 23S rRNA. One of the proteins that surrounds the polypeptide exit tunnel on the outside of the ribosome. Forms the main docking site for trigger factor binding to the ribosome.</text>
</comment>
<comment type="subunit">
    <text evidence="1">Part of the 50S ribosomal subunit. Contacts protein L29, and trigger factor when it is bound to the ribosome.</text>
</comment>
<comment type="similarity">
    <text evidence="1">Belongs to the universal ribosomal protein uL23 family.</text>
</comment>
<reference key="1">
    <citation type="journal article" date="2001" name="Science">
        <title>Comparative genomics of Listeria species.</title>
        <authorList>
            <person name="Glaser P."/>
            <person name="Frangeul L."/>
            <person name="Buchrieser C."/>
            <person name="Rusniok C."/>
            <person name="Amend A."/>
            <person name="Baquero F."/>
            <person name="Berche P."/>
            <person name="Bloecker H."/>
            <person name="Brandt P."/>
            <person name="Chakraborty T."/>
            <person name="Charbit A."/>
            <person name="Chetouani F."/>
            <person name="Couve E."/>
            <person name="de Daruvar A."/>
            <person name="Dehoux P."/>
            <person name="Domann E."/>
            <person name="Dominguez-Bernal G."/>
            <person name="Duchaud E."/>
            <person name="Durant L."/>
            <person name="Dussurget O."/>
            <person name="Entian K.-D."/>
            <person name="Fsihi H."/>
            <person name="Garcia-del Portillo F."/>
            <person name="Garrido P."/>
            <person name="Gautier L."/>
            <person name="Goebel W."/>
            <person name="Gomez-Lopez N."/>
            <person name="Hain T."/>
            <person name="Hauf J."/>
            <person name="Jackson D."/>
            <person name="Jones L.-M."/>
            <person name="Kaerst U."/>
            <person name="Kreft J."/>
            <person name="Kuhn M."/>
            <person name="Kunst F."/>
            <person name="Kurapkat G."/>
            <person name="Madueno E."/>
            <person name="Maitournam A."/>
            <person name="Mata Vicente J."/>
            <person name="Ng E."/>
            <person name="Nedjari H."/>
            <person name="Nordsiek G."/>
            <person name="Novella S."/>
            <person name="de Pablos B."/>
            <person name="Perez-Diaz J.-C."/>
            <person name="Purcell R."/>
            <person name="Remmel B."/>
            <person name="Rose M."/>
            <person name="Schlueter T."/>
            <person name="Simoes N."/>
            <person name="Tierrez A."/>
            <person name="Vazquez-Boland J.-A."/>
            <person name="Voss H."/>
            <person name="Wehland J."/>
            <person name="Cossart P."/>
        </authorList>
    </citation>
    <scope>NUCLEOTIDE SEQUENCE [LARGE SCALE GENOMIC DNA]</scope>
    <source>
        <strain>ATCC BAA-680 / CLIP 11262</strain>
    </source>
</reference>
<organism>
    <name type="scientific">Listeria innocua serovar 6a (strain ATCC BAA-680 / CLIP 11262)</name>
    <dbReference type="NCBI Taxonomy" id="272626"/>
    <lineage>
        <taxon>Bacteria</taxon>
        <taxon>Bacillati</taxon>
        <taxon>Bacillota</taxon>
        <taxon>Bacilli</taxon>
        <taxon>Bacillales</taxon>
        <taxon>Listeriaceae</taxon>
        <taxon>Listeria</taxon>
    </lineage>
</organism>